<protein>
    <recommendedName>
        <fullName>Transcriptional regulator WhiB1</fullName>
    </recommendedName>
</protein>
<name>WHIB1_MYCTO</name>
<feature type="chain" id="PRO_0000428604" description="Transcriptional regulator WhiB1">
    <location>
        <begin position="1"/>
        <end position="84"/>
    </location>
</feature>
<feature type="domain" description="4Fe-4S Wbl-type">
    <location>
        <begin position="8"/>
        <end position="70"/>
    </location>
</feature>
<feature type="binding site" evidence="1">
    <location>
        <position position="9"/>
    </location>
    <ligand>
        <name>[4Fe-4S] cluster</name>
        <dbReference type="ChEBI" id="CHEBI:49883"/>
    </ligand>
</feature>
<feature type="binding site" evidence="1">
    <location>
        <position position="37"/>
    </location>
    <ligand>
        <name>[4Fe-4S] cluster</name>
        <dbReference type="ChEBI" id="CHEBI:49883"/>
    </ligand>
</feature>
<feature type="binding site" evidence="1">
    <location>
        <position position="40"/>
    </location>
    <ligand>
        <name>[4Fe-4S] cluster</name>
        <dbReference type="ChEBI" id="CHEBI:49883"/>
    </ligand>
</feature>
<feature type="binding site" evidence="1">
    <location>
        <position position="46"/>
    </location>
    <ligand>
        <name>[4Fe-4S] cluster</name>
        <dbReference type="ChEBI" id="CHEBI:49883"/>
    </ligand>
</feature>
<dbReference type="EMBL" id="AE000516">
    <property type="protein sequence ID" value="AAK47657.1"/>
    <property type="molecule type" value="Genomic_DNA"/>
</dbReference>
<dbReference type="PIR" id="D70596">
    <property type="entry name" value="D70596"/>
</dbReference>
<dbReference type="RefSeq" id="WP_003416884.1">
    <property type="nucleotide sequence ID" value="NZ_KK341227.1"/>
</dbReference>
<dbReference type="SMR" id="P9WF42"/>
<dbReference type="GeneID" id="45427212"/>
<dbReference type="KEGG" id="mtc:MT3315"/>
<dbReference type="PATRIC" id="fig|83331.31.peg.3570"/>
<dbReference type="HOGENOM" id="CLU_106245_6_2_11"/>
<dbReference type="Proteomes" id="UP000001020">
    <property type="component" value="Chromosome"/>
</dbReference>
<dbReference type="GO" id="GO:0005737">
    <property type="term" value="C:cytoplasm"/>
    <property type="evidence" value="ECO:0007669"/>
    <property type="project" value="UniProtKB-SubCell"/>
</dbReference>
<dbReference type="GO" id="GO:0051539">
    <property type="term" value="F:4 iron, 4 sulfur cluster binding"/>
    <property type="evidence" value="ECO:0007669"/>
    <property type="project" value="UniProtKB-UniRule"/>
</dbReference>
<dbReference type="GO" id="GO:0035731">
    <property type="term" value="F:dinitrosyl-iron complex binding"/>
    <property type="evidence" value="ECO:0007669"/>
    <property type="project" value="UniProtKB-UniRule"/>
</dbReference>
<dbReference type="GO" id="GO:0003677">
    <property type="term" value="F:DNA binding"/>
    <property type="evidence" value="ECO:0007669"/>
    <property type="project" value="UniProtKB-UniRule"/>
</dbReference>
<dbReference type="GO" id="GO:0046872">
    <property type="term" value="F:metal ion binding"/>
    <property type="evidence" value="ECO:0007669"/>
    <property type="project" value="UniProtKB-KW"/>
</dbReference>
<dbReference type="GO" id="GO:0047134">
    <property type="term" value="F:protein-disulfide reductase [NAD(P)H] activity"/>
    <property type="evidence" value="ECO:0007669"/>
    <property type="project" value="TreeGrafter"/>
</dbReference>
<dbReference type="GO" id="GO:0045454">
    <property type="term" value="P:cell redox homeostasis"/>
    <property type="evidence" value="ECO:0007669"/>
    <property type="project" value="TreeGrafter"/>
</dbReference>
<dbReference type="GO" id="GO:0045892">
    <property type="term" value="P:negative regulation of DNA-templated transcription"/>
    <property type="evidence" value="ECO:0007669"/>
    <property type="project" value="TreeGrafter"/>
</dbReference>
<dbReference type="HAMAP" id="MF_01479">
    <property type="entry name" value="WhiB"/>
    <property type="match status" value="1"/>
</dbReference>
<dbReference type="InterPro" id="IPR034768">
    <property type="entry name" value="4FE4S_WBL"/>
</dbReference>
<dbReference type="InterPro" id="IPR003482">
    <property type="entry name" value="Whib"/>
</dbReference>
<dbReference type="PANTHER" id="PTHR38839:SF6">
    <property type="entry name" value="TRANSCRIPTIONAL REGULATOR WHIB1"/>
    <property type="match status" value="1"/>
</dbReference>
<dbReference type="PANTHER" id="PTHR38839">
    <property type="entry name" value="TRANSCRIPTIONAL REGULATOR WHID-RELATED"/>
    <property type="match status" value="1"/>
</dbReference>
<dbReference type="Pfam" id="PF02467">
    <property type="entry name" value="Whib"/>
    <property type="match status" value="1"/>
</dbReference>
<dbReference type="PROSITE" id="PS51674">
    <property type="entry name" value="4FE4S_WBL"/>
    <property type="match status" value="1"/>
</dbReference>
<reference key="1">
    <citation type="journal article" date="2002" name="J. Bacteriol.">
        <title>Whole-genome comparison of Mycobacterium tuberculosis clinical and laboratory strains.</title>
        <authorList>
            <person name="Fleischmann R.D."/>
            <person name="Alland D."/>
            <person name="Eisen J.A."/>
            <person name="Carpenter L."/>
            <person name="White O."/>
            <person name="Peterson J.D."/>
            <person name="DeBoy R.T."/>
            <person name="Dodson R.J."/>
            <person name="Gwinn M.L."/>
            <person name="Haft D.H."/>
            <person name="Hickey E.K."/>
            <person name="Kolonay J.F."/>
            <person name="Nelson W.C."/>
            <person name="Umayam L.A."/>
            <person name="Ermolaeva M.D."/>
            <person name="Salzberg S.L."/>
            <person name="Delcher A."/>
            <person name="Utterback T.R."/>
            <person name="Weidman J.F."/>
            <person name="Khouri H.M."/>
            <person name="Gill J."/>
            <person name="Mikula A."/>
            <person name="Bishai W."/>
            <person name="Jacobs W.R. Jr."/>
            <person name="Venter J.C."/>
            <person name="Fraser C.M."/>
        </authorList>
    </citation>
    <scope>NUCLEOTIDE SEQUENCE [LARGE SCALE GENOMIC DNA]</scope>
    <source>
        <strain>CDC 1551 / Oshkosh</strain>
    </source>
</reference>
<reference key="2">
    <citation type="journal article" date="2006" name="Antimicrob. Agents Chemother.">
        <title>Differential gene expression in response to exposure to antimycobacterial agents and other stress conditions among seven Mycobacterium tuberculosis whiB-like genes.</title>
        <authorList>
            <person name="Geiman D.E."/>
            <person name="Raghunand T.R."/>
            <person name="Agarwal N."/>
            <person name="Bishai W.R."/>
        </authorList>
    </citation>
    <scope>INDUCTION</scope>
    <source>
        <strain>CDC 1551 / Oshkosh</strain>
    </source>
</reference>
<reference key="3">
    <citation type="journal article" date="2006" name="Microbiology">
        <title>Regulation of the expression of whiB1 in Mycobacterium tuberculosis: role of cAMP receptor protein.</title>
        <authorList>
            <person name="Agarwal N."/>
            <person name="Raghunand T.R."/>
            <person name="Bishai W.R."/>
        </authorList>
    </citation>
    <scope>INDUCTION</scope>
    <source>
        <strain>CDC 1551 / Oshkosh</strain>
    </source>
</reference>
<reference key="4">
    <citation type="journal article" date="2012" name="PLoS ONE">
        <title>Gene expression of Mycobacterium tuberculosis putative transcription factors whiB1-7 in redox environments.</title>
        <authorList>
            <person name="Larsson C."/>
            <person name="Luna B."/>
            <person name="Ammerman N.C."/>
            <person name="Maiga M."/>
            <person name="Agarwal N."/>
            <person name="Bishai W.R."/>
        </authorList>
    </citation>
    <scope>INDUCTION</scope>
    <source>
        <strain>CDC 1551 / Oshkosh</strain>
    </source>
</reference>
<comment type="function">
    <text evidence="1">Acts as a transcriptional regulator. Probably redox-responsive. The apo- but not holo-form probably binds DNA (By similarity).</text>
</comment>
<comment type="cofactor">
    <cofactor evidence="1">
        <name>[4Fe-4S] cluster</name>
        <dbReference type="ChEBI" id="CHEBI:49883"/>
    </cofactor>
    <text evidence="1">Binds 1 [4Fe-4S] cluster per subunit. Following nitrosylation of the [4Fe-4S] cluster binds 1 [4Fe-8(NO)] cluster per subunit.</text>
</comment>
<comment type="subunit">
    <text evidence="1">Homodimer.</text>
</comment>
<comment type="subcellular location">
    <subcellularLocation>
        <location evidence="1">Cytoplasm</location>
    </subcellularLocation>
</comment>
<comment type="induction">
    <text evidence="2 3 4">Activated by CRP. Essentially constitutive over all growth phases. 2-fold induced by ethanol, repressed by SDS and heat shock. Not induced by hypoxia, slightly induced by NO and in macrophage and mouse infection, 10-fold induced by cAMP. There are 2 CRP-binding sites in the promoter of whiB1, at low concentrations of CRP with or without cAMP transcription of whiB1 is enhanced via site CRP1, then repressed as site CRP2 is filled.</text>
</comment>
<comment type="PTM">
    <text evidence="1">The Fe-S cluster can be nitrosylated by nitric oxide (NO).</text>
</comment>
<comment type="PTM">
    <text evidence="1">Upon Fe-S cluster removal intramolecular disulfide bonds are formed.</text>
</comment>
<comment type="similarity">
    <text evidence="5">Belongs to the WhiB family.</text>
</comment>
<evidence type="ECO:0000250" key="1"/>
<evidence type="ECO:0000269" key="2">
    <source>
    </source>
</evidence>
<evidence type="ECO:0000269" key="3">
    <source>
    </source>
</evidence>
<evidence type="ECO:0000269" key="4">
    <source>
    </source>
</evidence>
<evidence type="ECO:0000305" key="5"/>
<proteinExistence type="evidence at transcript level"/>
<organism>
    <name type="scientific">Mycobacterium tuberculosis (strain CDC 1551 / Oshkosh)</name>
    <dbReference type="NCBI Taxonomy" id="83331"/>
    <lineage>
        <taxon>Bacteria</taxon>
        <taxon>Bacillati</taxon>
        <taxon>Actinomycetota</taxon>
        <taxon>Actinomycetes</taxon>
        <taxon>Mycobacteriales</taxon>
        <taxon>Mycobacteriaceae</taxon>
        <taxon>Mycobacterium</taxon>
        <taxon>Mycobacterium tuberculosis complex</taxon>
    </lineage>
</organism>
<keyword id="KW-0004">4Fe-4S</keyword>
<keyword id="KW-0963">Cytoplasm</keyword>
<keyword id="KW-1015">Disulfide bond</keyword>
<keyword id="KW-0238">DNA-binding</keyword>
<keyword id="KW-0408">Iron</keyword>
<keyword id="KW-0411">Iron-sulfur</keyword>
<keyword id="KW-0479">Metal-binding</keyword>
<keyword id="KW-1185">Reference proteome</keyword>
<keyword id="KW-0804">Transcription</keyword>
<keyword id="KW-0805">Transcription regulation</keyword>
<accession>P9WF42</accession>
<accession>F2GK92</accession>
<accession>L0TEP0</accession>
<accession>O05847</accession>
<accession>Q7D5W8</accession>
<sequence length="84" mass="9319">MDWRHKAVCRDEDPELFFPVGNSGPALAQIADAKLVCNRCPVTTECLSWALNTGQDSGVWGGMSEDERRALKRRNARTKARTGV</sequence>
<gene>
    <name type="primary">whiB1</name>
    <name type="ordered locus">MT3315</name>
</gene>